<accession>A1ABI2</accession>
<feature type="chain" id="PRO_1000088587" description="Tyrosine--tRNA ligase">
    <location>
        <begin position="1"/>
        <end position="428"/>
    </location>
</feature>
<feature type="domain" description="S4 RNA-binding" evidence="1">
    <location>
        <begin position="361"/>
        <end position="418"/>
    </location>
</feature>
<feature type="short sequence motif" description="'HIGH' region">
    <location>
        <begin position="46"/>
        <end position="55"/>
    </location>
</feature>
<feature type="short sequence motif" description="'KMSKS' region">
    <location>
        <begin position="239"/>
        <end position="243"/>
    </location>
</feature>
<feature type="binding site" evidence="1">
    <location>
        <position position="41"/>
    </location>
    <ligand>
        <name>L-tyrosine</name>
        <dbReference type="ChEBI" id="CHEBI:58315"/>
    </ligand>
</feature>
<feature type="binding site" evidence="1">
    <location>
        <position position="179"/>
    </location>
    <ligand>
        <name>L-tyrosine</name>
        <dbReference type="ChEBI" id="CHEBI:58315"/>
    </ligand>
</feature>
<feature type="binding site" evidence="1">
    <location>
        <position position="183"/>
    </location>
    <ligand>
        <name>L-tyrosine</name>
        <dbReference type="ChEBI" id="CHEBI:58315"/>
    </ligand>
</feature>
<feature type="binding site" evidence="1">
    <location>
        <position position="242"/>
    </location>
    <ligand>
        <name>ATP</name>
        <dbReference type="ChEBI" id="CHEBI:30616"/>
    </ligand>
</feature>
<feature type="modified residue" description="N6-acetyllysine" evidence="1">
    <location>
        <position position="148"/>
    </location>
</feature>
<organism>
    <name type="scientific">Escherichia coli O1:K1 / APEC</name>
    <dbReference type="NCBI Taxonomy" id="405955"/>
    <lineage>
        <taxon>Bacteria</taxon>
        <taxon>Pseudomonadati</taxon>
        <taxon>Pseudomonadota</taxon>
        <taxon>Gammaproteobacteria</taxon>
        <taxon>Enterobacterales</taxon>
        <taxon>Enterobacteriaceae</taxon>
        <taxon>Escherichia</taxon>
    </lineage>
</organism>
<gene>
    <name evidence="1" type="primary">tyrS</name>
    <name type="ordered locus">Ecok1_15280</name>
    <name type="ORF">APECO1_720</name>
</gene>
<evidence type="ECO:0000255" key="1">
    <source>
        <dbReference type="HAMAP-Rule" id="MF_02006"/>
    </source>
</evidence>
<dbReference type="EC" id="6.1.1.1" evidence="1"/>
<dbReference type="EMBL" id="CP000468">
    <property type="protein sequence ID" value="ABJ01022.1"/>
    <property type="molecule type" value="Genomic_DNA"/>
</dbReference>
<dbReference type="SMR" id="A1ABI2"/>
<dbReference type="KEGG" id="ecv:APECO1_720"/>
<dbReference type="HOGENOM" id="CLU_024003_0_3_6"/>
<dbReference type="Proteomes" id="UP000008216">
    <property type="component" value="Chromosome"/>
</dbReference>
<dbReference type="GO" id="GO:0005829">
    <property type="term" value="C:cytosol"/>
    <property type="evidence" value="ECO:0007669"/>
    <property type="project" value="TreeGrafter"/>
</dbReference>
<dbReference type="GO" id="GO:0005524">
    <property type="term" value="F:ATP binding"/>
    <property type="evidence" value="ECO:0007669"/>
    <property type="project" value="UniProtKB-UniRule"/>
</dbReference>
<dbReference type="GO" id="GO:0003723">
    <property type="term" value="F:RNA binding"/>
    <property type="evidence" value="ECO:0007669"/>
    <property type="project" value="UniProtKB-KW"/>
</dbReference>
<dbReference type="GO" id="GO:0004831">
    <property type="term" value="F:tyrosine-tRNA ligase activity"/>
    <property type="evidence" value="ECO:0007669"/>
    <property type="project" value="UniProtKB-UniRule"/>
</dbReference>
<dbReference type="GO" id="GO:0006437">
    <property type="term" value="P:tyrosyl-tRNA aminoacylation"/>
    <property type="evidence" value="ECO:0007669"/>
    <property type="project" value="UniProtKB-UniRule"/>
</dbReference>
<dbReference type="CDD" id="cd00165">
    <property type="entry name" value="S4"/>
    <property type="match status" value="1"/>
</dbReference>
<dbReference type="CDD" id="cd00805">
    <property type="entry name" value="TyrRS_core"/>
    <property type="match status" value="1"/>
</dbReference>
<dbReference type="FunFam" id="1.10.240.10:FF:000001">
    <property type="entry name" value="Tyrosine--tRNA ligase"/>
    <property type="match status" value="1"/>
</dbReference>
<dbReference type="FunFam" id="3.10.290.10:FF:000007">
    <property type="entry name" value="Tyrosine--tRNA ligase"/>
    <property type="match status" value="1"/>
</dbReference>
<dbReference type="FunFam" id="3.40.50.620:FF:000008">
    <property type="entry name" value="Tyrosine--tRNA ligase"/>
    <property type="match status" value="1"/>
</dbReference>
<dbReference type="Gene3D" id="3.40.50.620">
    <property type="entry name" value="HUPs"/>
    <property type="match status" value="1"/>
</dbReference>
<dbReference type="Gene3D" id="3.10.290.10">
    <property type="entry name" value="RNA-binding S4 domain"/>
    <property type="match status" value="1"/>
</dbReference>
<dbReference type="Gene3D" id="1.10.240.10">
    <property type="entry name" value="Tyrosyl-Transfer RNA Synthetase"/>
    <property type="match status" value="1"/>
</dbReference>
<dbReference type="HAMAP" id="MF_02006">
    <property type="entry name" value="Tyr_tRNA_synth_type1"/>
    <property type="match status" value="1"/>
</dbReference>
<dbReference type="InterPro" id="IPR001412">
    <property type="entry name" value="aa-tRNA-synth_I_CS"/>
</dbReference>
<dbReference type="InterPro" id="IPR002305">
    <property type="entry name" value="aa-tRNA-synth_Ic"/>
</dbReference>
<dbReference type="InterPro" id="IPR014729">
    <property type="entry name" value="Rossmann-like_a/b/a_fold"/>
</dbReference>
<dbReference type="InterPro" id="IPR002942">
    <property type="entry name" value="S4_RNA-bd"/>
</dbReference>
<dbReference type="InterPro" id="IPR036986">
    <property type="entry name" value="S4_RNA-bd_sf"/>
</dbReference>
<dbReference type="InterPro" id="IPR054608">
    <property type="entry name" value="SYY-like_C"/>
</dbReference>
<dbReference type="InterPro" id="IPR002307">
    <property type="entry name" value="Tyr-tRNA-ligase"/>
</dbReference>
<dbReference type="InterPro" id="IPR024088">
    <property type="entry name" value="Tyr-tRNA-ligase_bac-type"/>
</dbReference>
<dbReference type="InterPro" id="IPR024107">
    <property type="entry name" value="Tyr-tRNA-ligase_bac_1"/>
</dbReference>
<dbReference type="NCBIfam" id="TIGR00234">
    <property type="entry name" value="tyrS"/>
    <property type="match status" value="1"/>
</dbReference>
<dbReference type="PANTHER" id="PTHR11766:SF0">
    <property type="entry name" value="TYROSINE--TRNA LIGASE, MITOCHONDRIAL"/>
    <property type="match status" value="1"/>
</dbReference>
<dbReference type="PANTHER" id="PTHR11766">
    <property type="entry name" value="TYROSYL-TRNA SYNTHETASE"/>
    <property type="match status" value="1"/>
</dbReference>
<dbReference type="Pfam" id="PF22421">
    <property type="entry name" value="SYY_C-terminal"/>
    <property type="match status" value="1"/>
</dbReference>
<dbReference type="Pfam" id="PF00579">
    <property type="entry name" value="tRNA-synt_1b"/>
    <property type="match status" value="1"/>
</dbReference>
<dbReference type="PRINTS" id="PR01040">
    <property type="entry name" value="TRNASYNTHTYR"/>
</dbReference>
<dbReference type="SMART" id="SM00363">
    <property type="entry name" value="S4"/>
    <property type="match status" value="1"/>
</dbReference>
<dbReference type="SUPFAM" id="SSF55174">
    <property type="entry name" value="Alpha-L RNA-binding motif"/>
    <property type="match status" value="1"/>
</dbReference>
<dbReference type="SUPFAM" id="SSF52374">
    <property type="entry name" value="Nucleotidylyl transferase"/>
    <property type="match status" value="1"/>
</dbReference>
<dbReference type="PROSITE" id="PS00178">
    <property type="entry name" value="AA_TRNA_LIGASE_I"/>
    <property type="match status" value="1"/>
</dbReference>
<dbReference type="PROSITE" id="PS50889">
    <property type="entry name" value="S4"/>
    <property type="match status" value="1"/>
</dbReference>
<proteinExistence type="inferred from homology"/>
<comment type="function">
    <text evidence="1">Catalyzes the attachment of tyrosine to tRNA(Tyr) in a two-step reaction: tyrosine is first activated by ATP to form Tyr-AMP and then transferred to the acceptor end of tRNA(Tyr).</text>
</comment>
<comment type="catalytic activity">
    <reaction evidence="1">
        <text>tRNA(Tyr) + L-tyrosine + ATP = L-tyrosyl-tRNA(Tyr) + AMP + diphosphate + H(+)</text>
        <dbReference type="Rhea" id="RHEA:10220"/>
        <dbReference type="Rhea" id="RHEA-COMP:9706"/>
        <dbReference type="Rhea" id="RHEA-COMP:9707"/>
        <dbReference type="ChEBI" id="CHEBI:15378"/>
        <dbReference type="ChEBI" id="CHEBI:30616"/>
        <dbReference type="ChEBI" id="CHEBI:33019"/>
        <dbReference type="ChEBI" id="CHEBI:58315"/>
        <dbReference type="ChEBI" id="CHEBI:78442"/>
        <dbReference type="ChEBI" id="CHEBI:78536"/>
        <dbReference type="ChEBI" id="CHEBI:456215"/>
        <dbReference type="EC" id="6.1.1.1"/>
    </reaction>
</comment>
<comment type="subunit">
    <text evidence="1">Homodimer.</text>
</comment>
<comment type="subcellular location">
    <subcellularLocation>
        <location evidence="1">Cytoplasm</location>
    </subcellularLocation>
</comment>
<comment type="similarity">
    <text evidence="1">Belongs to the class-I aminoacyl-tRNA synthetase family. TyrS type 1 subfamily.</text>
</comment>
<keyword id="KW-0007">Acetylation</keyword>
<keyword id="KW-0030">Aminoacyl-tRNA synthetase</keyword>
<keyword id="KW-0067">ATP-binding</keyword>
<keyword id="KW-0963">Cytoplasm</keyword>
<keyword id="KW-0436">Ligase</keyword>
<keyword id="KW-0547">Nucleotide-binding</keyword>
<keyword id="KW-0648">Protein biosynthesis</keyword>
<keyword id="KW-1185">Reference proteome</keyword>
<keyword id="KW-0694">RNA-binding</keyword>
<sequence>MEILMASSNLIKQLQERGLVAQVTDEEALAERLAQGPIALYCGFDPTADSLHLGHLVPLLCLKRFQQAGHKPVALVGGATGLIGDPSFKAAERKLNTEETVQEWVDKIRKQVAPFLDFDCGENSAIAANNYDWFGNMNVLTFLRDIGKHFSVNQMINKEAVKQRLNREDQGISFTEFSYNLLQGYDFACLNKQYGVVLQIGGSDQWGNITSGIDLTRRLHQNQVFGLTVPLITKADGTKFGKTEGGAVWLDPKKTSPYKFYQFWINTADADVYRFLKFFTFMSIEEINALEEEDKNSGKAPRAQYVLAEQVTRLVHGEDGLQAAKRITECLFSGSLSALSEADFEQLAQDGVPMVEMEKGADLMQALVDSELQPSRGQARKTIASNAITINGEKQSDPEYFFKEEDRLFGRFTLLRRGKKNYCLICWK</sequence>
<name>SYY_ECOK1</name>
<reference key="1">
    <citation type="journal article" date="2007" name="J. Bacteriol.">
        <title>The genome sequence of avian pathogenic Escherichia coli strain O1:K1:H7 shares strong similarities with human extraintestinal pathogenic E. coli genomes.</title>
        <authorList>
            <person name="Johnson T.J."/>
            <person name="Kariyawasam S."/>
            <person name="Wannemuehler Y."/>
            <person name="Mangiamele P."/>
            <person name="Johnson S.J."/>
            <person name="Doetkott C."/>
            <person name="Skyberg J.A."/>
            <person name="Lynne A.M."/>
            <person name="Johnson J.R."/>
            <person name="Nolan L.K."/>
        </authorList>
    </citation>
    <scope>NUCLEOTIDE SEQUENCE [LARGE SCALE GENOMIC DNA]</scope>
</reference>
<protein>
    <recommendedName>
        <fullName evidence="1">Tyrosine--tRNA ligase</fullName>
        <ecNumber evidence="1">6.1.1.1</ecNumber>
    </recommendedName>
    <alternativeName>
        <fullName evidence="1">Tyrosyl-tRNA synthetase</fullName>
        <shortName evidence="1">TyrRS</shortName>
    </alternativeName>
</protein>